<evidence type="ECO:0000255" key="1">
    <source>
        <dbReference type="HAMAP-Rule" id="MF_01347"/>
    </source>
</evidence>
<evidence type="ECO:0000305" key="2"/>
<organism>
    <name type="scientific">Karelsulcia muelleri (strain GWSS)</name>
    <name type="common">Sulcia muelleri</name>
    <dbReference type="NCBI Taxonomy" id="444179"/>
    <lineage>
        <taxon>Bacteria</taxon>
        <taxon>Pseudomonadati</taxon>
        <taxon>Bacteroidota</taxon>
        <taxon>Flavobacteriia</taxon>
        <taxon>Flavobacteriales</taxon>
        <taxon>Candidatus Karelsulcia</taxon>
    </lineage>
</organism>
<keyword id="KW-0066">ATP synthesis</keyword>
<keyword id="KW-0067">ATP-binding</keyword>
<keyword id="KW-1003">Cell membrane</keyword>
<keyword id="KW-0139">CF(1)</keyword>
<keyword id="KW-0375">Hydrogen ion transport</keyword>
<keyword id="KW-0406">Ion transport</keyword>
<keyword id="KW-0472">Membrane</keyword>
<keyword id="KW-0547">Nucleotide-binding</keyword>
<keyword id="KW-1278">Translocase</keyword>
<keyword id="KW-0813">Transport</keyword>
<dbReference type="EC" id="7.1.2.2" evidence="1"/>
<dbReference type="EMBL" id="CP000770">
    <property type="protein sequence ID" value="ABS30450.1"/>
    <property type="status" value="ALT_INIT"/>
    <property type="molecule type" value="Genomic_DNA"/>
</dbReference>
<dbReference type="SMR" id="A8Z6C7"/>
<dbReference type="STRING" id="444179.SMGWSS_018"/>
<dbReference type="KEGG" id="smg:SMGWSS_018"/>
<dbReference type="HOGENOM" id="CLU_022398_0_2_10"/>
<dbReference type="Proteomes" id="UP000000781">
    <property type="component" value="Chromosome"/>
</dbReference>
<dbReference type="GO" id="GO:0005886">
    <property type="term" value="C:plasma membrane"/>
    <property type="evidence" value="ECO:0007669"/>
    <property type="project" value="UniProtKB-SubCell"/>
</dbReference>
<dbReference type="GO" id="GO:0045259">
    <property type="term" value="C:proton-transporting ATP synthase complex"/>
    <property type="evidence" value="ECO:0007669"/>
    <property type="project" value="UniProtKB-KW"/>
</dbReference>
<dbReference type="GO" id="GO:0005524">
    <property type="term" value="F:ATP binding"/>
    <property type="evidence" value="ECO:0007669"/>
    <property type="project" value="UniProtKB-UniRule"/>
</dbReference>
<dbReference type="GO" id="GO:0016887">
    <property type="term" value="F:ATP hydrolysis activity"/>
    <property type="evidence" value="ECO:0007669"/>
    <property type="project" value="InterPro"/>
</dbReference>
<dbReference type="GO" id="GO:0046933">
    <property type="term" value="F:proton-transporting ATP synthase activity, rotational mechanism"/>
    <property type="evidence" value="ECO:0007669"/>
    <property type="project" value="UniProtKB-UniRule"/>
</dbReference>
<dbReference type="CDD" id="cd18110">
    <property type="entry name" value="ATP-synt_F1_beta_C"/>
    <property type="match status" value="1"/>
</dbReference>
<dbReference type="CDD" id="cd18115">
    <property type="entry name" value="ATP-synt_F1_beta_N"/>
    <property type="match status" value="1"/>
</dbReference>
<dbReference type="CDD" id="cd01133">
    <property type="entry name" value="F1-ATPase_beta_CD"/>
    <property type="match status" value="1"/>
</dbReference>
<dbReference type="FunFam" id="1.10.1140.10:FF:000005">
    <property type="entry name" value="ATP synthase subunit beta"/>
    <property type="match status" value="1"/>
</dbReference>
<dbReference type="FunFam" id="3.40.50.300:FF:000004">
    <property type="entry name" value="ATP synthase subunit beta"/>
    <property type="match status" value="1"/>
</dbReference>
<dbReference type="Gene3D" id="2.40.10.170">
    <property type="match status" value="1"/>
</dbReference>
<dbReference type="Gene3D" id="1.10.1140.10">
    <property type="entry name" value="Bovine Mitochondrial F1-atpase, Atp Synthase Beta Chain, Chain D, domain 3"/>
    <property type="match status" value="1"/>
</dbReference>
<dbReference type="Gene3D" id="3.40.50.300">
    <property type="entry name" value="P-loop containing nucleotide triphosphate hydrolases"/>
    <property type="match status" value="1"/>
</dbReference>
<dbReference type="HAMAP" id="MF_01347">
    <property type="entry name" value="ATP_synth_beta_bact"/>
    <property type="match status" value="1"/>
</dbReference>
<dbReference type="InterPro" id="IPR003593">
    <property type="entry name" value="AAA+_ATPase"/>
</dbReference>
<dbReference type="InterPro" id="IPR055190">
    <property type="entry name" value="ATP-synt_VA_C"/>
</dbReference>
<dbReference type="InterPro" id="IPR005722">
    <property type="entry name" value="ATP_synth_F1_bsu"/>
</dbReference>
<dbReference type="InterPro" id="IPR050053">
    <property type="entry name" value="ATPase_alpha/beta_chains"/>
</dbReference>
<dbReference type="InterPro" id="IPR004100">
    <property type="entry name" value="ATPase_F1/V1/A1_a/bsu_N"/>
</dbReference>
<dbReference type="InterPro" id="IPR036121">
    <property type="entry name" value="ATPase_F1/V1/A1_a/bsu_N_sf"/>
</dbReference>
<dbReference type="InterPro" id="IPR000194">
    <property type="entry name" value="ATPase_F1/V1/A1_a/bsu_nucl-bd"/>
</dbReference>
<dbReference type="InterPro" id="IPR024034">
    <property type="entry name" value="ATPase_F1/V1_b/a_C"/>
</dbReference>
<dbReference type="InterPro" id="IPR027417">
    <property type="entry name" value="P-loop_NTPase"/>
</dbReference>
<dbReference type="NCBIfam" id="TIGR01039">
    <property type="entry name" value="atpD"/>
    <property type="match status" value="1"/>
</dbReference>
<dbReference type="PANTHER" id="PTHR15184">
    <property type="entry name" value="ATP SYNTHASE"/>
    <property type="match status" value="1"/>
</dbReference>
<dbReference type="PANTHER" id="PTHR15184:SF71">
    <property type="entry name" value="ATP SYNTHASE SUBUNIT BETA, MITOCHONDRIAL"/>
    <property type="match status" value="1"/>
</dbReference>
<dbReference type="Pfam" id="PF00006">
    <property type="entry name" value="ATP-synt_ab"/>
    <property type="match status" value="1"/>
</dbReference>
<dbReference type="Pfam" id="PF02874">
    <property type="entry name" value="ATP-synt_ab_N"/>
    <property type="match status" value="1"/>
</dbReference>
<dbReference type="Pfam" id="PF22919">
    <property type="entry name" value="ATP-synt_VA_C"/>
    <property type="match status" value="1"/>
</dbReference>
<dbReference type="SMART" id="SM00382">
    <property type="entry name" value="AAA"/>
    <property type="match status" value="1"/>
</dbReference>
<dbReference type="SUPFAM" id="SSF47917">
    <property type="entry name" value="C-terminal domain of alpha and beta subunits of F1 ATP synthase"/>
    <property type="match status" value="1"/>
</dbReference>
<dbReference type="SUPFAM" id="SSF50615">
    <property type="entry name" value="N-terminal domain of alpha and beta subunits of F1 ATP synthase"/>
    <property type="match status" value="1"/>
</dbReference>
<dbReference type="SUPFAM" id="SSF52540">
    <property type="entry name" value="P-loop containing nucleoside triphosphate hydrolases"/>
    <property type="match status" value="1"/>
</dbReference>
<gene>
    <name evidence="1" type="primary">atpD</name>
    <name type="ordered locus">SMGWSS_018</name>
</gene>
<protein>
    <recommendedName>
        <fullName evidence="1">ATP synthase subunit beta</fullName>
        <ecNumber evidence="1">7.1.2.2</ecNumber>
    </recommendedName>
    <alternativeName>
        <fullName evidence="1">ATP synthase F1 sector subunit beta</fullName>
    </alternativeName>
    <alternativeName>
        <fullName evidence="1">F-ATPase subunit beta</fullName>
    </alternativeName>
</protein>
<sequence>MINKVKGKIIQIIGPVIDVLFENVSSLPMIYDSLEVFNPKGNQIILEVQQHIGECTVRCISMDITDGLKRGQDVFSLGTTISMPIGEEINGRVFNVVGNTIDGLGDLNNSKRISIHRNPPKFEYLSTNIDILYTGIKVIDLVEPYIKGGKIGLFGGAGVGKTVLIQELINNIAKGYGGLSVFAGVGERTREGNDLLREMISSGIIKYGDSFLEDMKNGKWDISKVDKNELKNSKATFVFGQMNEPPGARARVVLSGLTLAEYYRDSFRKGRDVLFFIDNIFRFTQAGSELSALLGRMPSAVGYQPTLASEMGTMQERITSTKNGSITSIQAVYIPADDLSDPAPATTFSHLDATTVLSRKISSLGIYPAVDPLSSTSRILSIEFIGNDHYLCAQRVKQILQRYQELQDIIAILGIEELSEEDKIIVHRARRVQRFLSQPFNVAEQFTGITGKLVNIKDTIEGFNLILDGKLDNIAEVHFNLKGTISEVIDSSKKKI</sequence>
<feature type="chain" id="PRO_0000339594" description="ATP synthase subunit beta">
    <location>
        <begin position="1"/>
        <end position="496"/>
    </location>
</feature>
<feature type="binding site" evidence="1">
    <location>
        <begin position="155"/>
        <end position="162"/>
    </location>
    <ligand>
        <name>ATP</name>
        <dbReference type="ChEBI" id="CHEBI:30616"/>
    </ligand>
</feature>
<proteinExistence type="inferred from homology"/>
<reference key="1">
    <citation type="journal article" date="2007" name="Proc. Natl. Acad. Sci. U.S.A.">
        <title>Parallel genomic evolution and metabolic interdependence in an ancient symbiosis.</title>
        <authorList>
            <person name="McCutcheon J.P."/>
            <person name="Moran N.A."/>
        </authorList>
    </citation>
    <scope>NUCLEOTIDE SEQUENCE [LARGE SCALE GENOMIC DNA]</scope>
    <source>
        <strain>GWSS</strain>
    </source>
</reference>
<name>ATPB_KARMG</name>
<comment type="function">
    <text evidence="1">Produces ATP from ADP in the presence of a proton gradient across the membrane. The catalytic sites are hosted primarily by the beta subunits.</text>
</comment>
<comment type="catalytic activity">
    <reaction evidence="1">
        <text>ATP + H2O + 4 H(+)(in) = ADP + phosphate + 5 H(+)(out)</text>
        <dbReference type="Rhea" id="RHEA:57720"/>
        <dbReference type="ChEBI" id="CHEBI:15377"/>
        <dbReference type="ChEBI" id="CHEBI:15378"/>
        <dbReference type="ChEBI" id="CHEBI:30616"/>
        <dbReference type="ChEBI" id="CHEBI:43474"/>
        <dbReference type="ChEBI" id="CHEBI:456216"/>
        <dbReference type="EC" id="7.1.2.2"/>
    </reaction>
</comment>
<comment type="subunit">
    <text evidence="1">F-type ATPases have 2 components, CF(1) - the catalytic core - and CF(0) - the membrane proton channel. CF(1) has five subunits: alpha(3), beta(3), gamma(1), delta(1), epsilon(1). CF(0) has three main subunits: a(1), b(2) and c(9-12). The alpha and beta chains form an alternating ring which encloses part of the gamma chain. CF(1) is attached to CF(0) by a central stalk formed by the gamma and epsilon chains, while a peripheral stalk is formed by the delta and b chains.</text>
</comment>
<comment type="subcellular location">
    <subcellularLocation>
        <location evidence="1">Cell membrane</location>
        <topology evidence="1">Peripheral membrane protein</topology>
    </subcellularLocation>
</comment>
<comment type="similarity">
    <text evidence="1">Belongs to the ATPase alpha/beta chains family.</text>
</comment>
<comment type="sequence caution" evidence="2">
    <conflict type="erroneous initiation">
        <sequence resource="EMBL-CDS" id="ABS30450"/>
    </conflict>
</comment>
<accession>A8Z6C7</accession>